<evidence type="ECO:0000250" key="1"/>
<evidence type="ECO:0000250" key="2">
    <source>
        <dbReference type="UniProtKB" id="P59940"/>
    </source>
</evidence>
<evidence type="ECO:0000250" key="3">
    <source>
        <dbReference type="UniProtKB" id="Q86QT3"/>
    </source>
</evidence>
<evidence type="ECO:0000250" key="4">
    <source>
        <dbReference type="UniProtKB" id="Q86QU9"/>
    </source>
</evidence>
<evidence type="ECO:0000303" key="5">
    <source>
    </source>
</evidence>
<evidence type="ECO:0000305" key="6"/>
<accession>Q86QV4</accession>
<feature type="chain" id="PRO_0000066846" description="Potassium channel toxin gamma-KTx 4.8">
    <location>
        <begin position="1"/>
        <end position="43"/>
    </location>
</feature>
<feature type="disulfide bond" evidence="3">
    <location>
        <begin position="5"/>
        <end position="23"/>
    </location>
</feature>
<feature type="disulfide bond" evidence="3">
    <location>
        <begin position="11"/>
        <end position="34"/>
    </location>
</feature>
<feature type="disulfide bond" evidence="3">
    <location>
        <begin position="20"/>
        <end position="39"/>
    </location>
</feature>
<feature type="disulfide bond" evidence="3">
    <location>
        <begin position="24"/>
        <end position="41"/>
    </location>
</feature>
<dbReference type="EMBL" id="AY159339">
    <property type="protein sequence ID" value="AAO22217.1"/>
    <property type="molecule type" value="mRNA"/>
</dbReference>
<dbReference type="SMR" id="Q86QV4"/>
<dbReference type="GO" id="GO:0005576">
    <property type="term" value="C:extracellular region"/>
    <property type="evidence" value="ECO:0007669"/>
    <property type="project" value="UniProtKB-SubCell"/>
</dbReference>
<dbReference type="GO" id="GO:0019870">
    <property type="term" value="F:potassium channel inhibitor activity"/>
    <property type="evidence" value="ECO:0007669"/>
    <property type="project" value="InterPro"/>
</dbReference>
<dbReference type="GO" id="GO:0090729">
    <property type="term" value="F:toxin activity"/>
    <property type="evidence" value="ECO:0007669"/>
    <property type="project" value="UniProtKB-KW"/>
</dbReference>
<dbReference type="Gene3D" id="3.30.30.10">
    <property type="entry name" value="Knottin, scorpion toxin-like"/>
    <property type="match status" value="1"/>
</dbReference>
<dbReference type="InterPro" id="IPR012622">
    <property type="entry name" value="Ergtoxin"/>
</dbReference>
<dbReference type="InterPro" id="IPR036574">
    <property type="entry name" value="Scorpion_toxin-like_sf"/>
</dbReference>
<dbReference type="Pfam" id="PF08086">
    <property type="entry name" value="Toxin_17"/>
    <property type="match status" value="1"/>
</dbReference>
<dbReference type="SUPFAM" id="SSF57095">
    <property type="entry name" value="Scorpion toxin-like"/>
    <property type="match status" value="1"/>
</dbReference>
<dbReference type="PROSITE" id="PS60026">
    <property type="entry name" value="ERGTX"/>
    <property type="match status" value="1"/>
</dbReference>
<sequence>DRDSCVDKSKCGKYGYYHQCDECCKKAGDRAGNCVYYKCKCNP</sequence>
<reference key="1">
    <citation type="journal article" date="2002" name="FEBS Lett.">
        <title>A large number of novel Ergtoxin-like genes and ERG K+-channels blocking peptides from scorpions of the genus Centruroides.</title>
        <authorList>
            <person name="Corona M."/>
            <person name="Gurrola G.B."/>
            <person name="Merino E."/>
            <person name="Cassulini R.R."/>
            <person name="Valdez-Cruz N.A."/>
            <person name="Garcia B."/>
            <person name="Ramirez-Dominguez M.E."/>
            <person name="Coronas F.I."/>
            <person name="Zamudio F.Z."/>
            <person name="Wanke E."/>
            <person name="Possani L.D."/>
        </authorList>
    </citation>
    <scope>NUCLEOTIDE SEQUENCE [MRNA]</scope>
    <scope>NOMENCLATURE</scope>
    <source>
        <tissue>Venom gland</tissue>
    </source>
</reference>
<name>KGX48_CENEL</name>
<comment type="function">
    <text evidence="2">Reversibly blocks Kv11/ERG potassium channels.</text>
</comment>
<comment type="subcellular location">
    <subcellularLocation>
        <location evidence="4">Secreted</location>
    </subcellularLocation>
</comment>
<comment type="tissue specificity">
    <text evidence="6">Expressed by the venom gland.</text>
</comment>
<comment type="domain">
    <text evidence="1">The presence of a 'disulfide through disulfide knot' structurally defines this protein as a knottin.</text>
</comment>
<comment type="domain">
    <text evidence="3">Has the CSalpha/beta fold, which comprises one or two short alpha helices connected to anti-parallel beta-sheets stabilized by three or four disulfide bonds.</text>
</comment>
<comment type="similarity">
    <text evidence="6">Belongs to the ergtoxin family. Gamma-KTx 4 subfamily.</text>
</comment>
<organism>
    <name type="scientific">Centruroides elegans</name>
    <name type="common">Bark scorpion</name>
    <dbReference type="NCBI Taxonomy" id="217897"/>
    <lineage>
        <taxon>Eukaryota</taxon>
        <taxon>Metazoa</taxon>
        <taxon>Ecdysozoa</taxon>
        <taxon>Arthropoda</taxon>
        <taxon>Chelicerata</taxon>
        <taxon>Arachnida</taxon>
        <taxon>Scorpiones</taxon>
        <taxon>Buthida</taxon>
        <taxon>Buthoidea</taxon>
        <taxon>Buthidae</taxon>
        <taxon>Centruroides</taxon>
    </lineage>
</organism>
<protein>
    <recommendedName>
        <fullName evidence="5">Potassium channel toxin gamma-KTx 4.8</fullName>
    </recommendedName>
    <alternativeName>
        <fullName evidence="6">CeErgTx3</fullName>
        <shortName evidence="5">CeErg3</shortName>
        <shortName evidence="5">ErgTx3</shortName>
    </alternativeName>
    <alternativeName>
        <fullName evidence="5">Ergtoxin-like protein</fullName>
    </alternativeName>
</protein>
<proteinExistence type="inferred from homology"/>
<keyword id="KW-1015">Disulfide bond</keyword>
<keyword id="KW-0872">Ion channel impairing toxin</keyword>
<keyword id="KW-0960">Knottin</keyword>
<keyword id="KW-0528">Neurotoxin</keyword>
<keyword id="KW-0632">Potassium channel impairing toxin</keyword>
<keyword id="KW-0964">Secreted</keyword>
<keyword id="KW-0800">Toxin</keyword>
<keyword id="KW-1220">Voltage-gated potassium channel impairing toxin</keyword>